<reference key="1">
    <citation type="journal article" date="2007" name="Science">
        <title>The Fusarium graminearum genome reveals a link between localized polymorphism and pathogen specialization.</title>
        <authorList>
            <person name="Cuomo C.A."/>
            <person name="Gueldener U."/>
            <person name="Xu J.-R."/>
            <person name="Trail F."/>
            <person name="Turgeon B.G."/>
            <person name="Di Pietro A."/>
            <person name="Walton J.D."/>
            <person name="Ma L.-J."/>
            <person name="Baker S.E."/>
            <person name="Rep M."/>
            <person name="Adam G."/>
            <person name="Antoniw J."/>
            <person name="Baldwin T."/>
            <person name="Calvo S.E."/>
            <person name="Chang Y.-L."/>
            <person name="DeCaprio D."/>
            <person name="Gale L.R."/>
            <person name="Gnerre S."/>
            <person name="Goswami R.S."/>
            <person name="Hammond-Kosack K."/>
            <person name="Harris L.J."/>
            <person name="Hilburn K."/>
            <person name="Kennell J.C."/>
            <person name="Kroken S."/>
            <person name="Magnuson J.K."/>
            <person name="Mannhaupt G."/>
            <person name="Mauceli E.W."/>
            <person name="Mewes H.-W."/>
            <person name="Mitterbauer R."/>
            <person name="Muehlbauer G."/>
            <person name="Muensterkoetter M."/>
            <person name="Nelson D."/>
            <person name="O'Donnell K."/>
            <person name="Ouellet T."/>
            <person name="Qi W."/>
            <person name="Quesneville H."/>
            <person name="Roncero M.I.G."/>
            <person name="Seong K.-Y."/>
            <person name="Tetko I.V."/>
            <person name="Urban M."/>
            <person name="Waalwijk C."/>
            <person name="Ward T.J."/>
            <person name="Yao J."/>
            <person name="Birren B.W."/>
            <person name="Kistler H.C."/>
        </authorList>
    </citation>
    <scope>NUCLEOTIDE SEQUENCE [LARGE SCALE GENOMIC DNA]</scope>
    <source>
        <strain>ATCC MYA-4620 / CBS 123657 / FGSC 9075 / NRRL 31084 / PH-1</strain>
    </source>
</reference>
<reference key="2">
    <citation type="journal article" date="2010" name="Nature">
        <title>Comparative genomics reveals mobile pathogenicity chromosomes in Fusarium.</title>
        <authorList>
            <person name="Ma L.-J."/>
            <person name="van der Does H.C."/>
            <person name="Borkovich K.A."/>
            <person name="Coleman J.J."/>
            <person name="Daboussi M.-J."/>
            <person name="Di Pietro A."/>
            <person name="Dufresne M."/>
            <person name="Freitag M."/>
            <person name="Grabherr M."/>
            <person name="Henrissat B."/>
            <person name="Houterman P.M."/>
            <person name="Kang S."/>
            <person name="Shim W.-B."/>
            <person name="Woloshuk C."/>
            <person name="Xie X."/>
            <person name="Xu J.-R."/>
            <person name="Antoniw J."/>
            <person name="Baker S.E."/>
            <person name="Bluhm B.H."/>
            <person name="Breakspear A."/>
            <person name="Brown D.W."/>
            <person name="Butchko R.A.E."/>
            <person name="Chapman S."/>
            <person name="Coulson R."/>
            <person name="Coutinho P.M."/>
            <person name="Danchin E.G.J."/>
            <person name="Diener A."/>
            <person name="Gale L.R."/>
            <person name="Gardiner D.M."/>
            <person name="Goff S."/>
            <person name="Hammond-Kosack K.E."/>
            <person name="Hilburn K."/>
            <person name="Hua-Van A."/>
            <person name="Jonkers W."/>
            <person name="Kazan K."/>
            <person name="Kodira C.D."/>
            <person name="Koehrsen M."/>
            <person name="Kumar L."/>
            <person name="Lee Y.-H."/>
            <person name="Li L."/>
            <person name="Manners J.M."/>
            <person name="Miranda-Saavedra D."/>
            <person name="Mukherjee M."/>
            <person name="Park G."/>
            <person name="Park J."/>
            <person name="Park S.-Y."/>
            <person name="Proctor R.H."/>
            <person name="Regev A."/>
            <person name="Ruiz-Roldan M.C."/>
            <person name="Sain D."/>
            <person name="Sakthikumar S."/>
            <person name="Sykes S."/>
            <person name="Schwartz D.C."/>
            <person name="Turgeon B.G."/>
            <person name="Wapinski I."/>
            <person name="Yoder O."/>
            <person name="Young S."/>
            <person name="Zeng Q."/>
            <person name="Zhou S."/>
            <person name="Galagan J."/>
            <person name="Cuomo C.A."/>
            <person name="Kistler H.C."/>
            <person name="Rep M."/>
        </authorList>
    </citation>
    <scope>GENOME REANNOTATION</scope>
    <source>
        <strain>ATCC MYA-4620 / CBS 123657 / FGSC 9075 / NRRL 31084 / PH-1</strain>
    </source>
</reference>
<reference key="3">
    <citation type="journal article" date="2015" name="BMC Genomics">
        <title>The completed genome sequence of the pathogenic ascomycete fungus Fusarium graminearum.</title>
        <authorList>
            <person name="King R."/>
            <person name="Urban M."/>
            <person name="Hammond-Kosack M.C.U."/>
            <person name="Hassani-Pak K."/>
            <person name="Hammond-Kosack K.E."/>
        </authorList>
    </citation>
    <scope>NUCLEOTIDE SEQUENCE [LARGE SCALE GENOMIC DNA]</scope>
    <source>
        <strain>ATCC MYA-4620 / CBS 123657 / FGSC 9075 / NRRL 31084 / PH-1</strain>
    </source>
</reference>
<reference key="4">
    <citation type="journal article" date="2016" name="Fungal Biol.">
        <title>Chitin synthase gene FgCHS8 affects virulence and fungal cell wall sensitivity to environmental stress in Fusarium graminearum.</title>
        <authorList>
            <person name="Zhang Y.Z."/>
            <person name="Chen Q."/>
            <person name="Liu C.H."/>
            <person name="Liu Y.B."/>
            <person name="Yi P."/>
            <person name="Niu K.X."/>
            <person name="Wang Y.Q."/>
            <person name="Wang A.Q."/>
            <person name="Yu H.Y."/>
            <person name="Pu Z.E."/>
            <person name="Jiang Q.T."/>
            <person name="Wei Y.M."/>
            <person name="Qi P.F."/>
            <person name="Zheng Y.L."/>
        </authorList>
    </citation>
    <scope>FUNCTION</scope>
    <scope>DISRUPTION PHENOTYPE</scope>
    <scope>SUBCELLULAR LOCATION</scope>
</reference>
<comment type="function">
    <text evidence="4 7">Polymerizes chitin, a structural polymer of the cell wall and septum, by transferring the sugar moiety of UDP-GlcNAc to the non-reducing end of the growing chitin polymer (Probable). Participated in the development of cell wall and plays a critical role in fungal response to environmental stresses (PubMed:27109372). Necessary for pathogenicity and deoxinivalenol (DON) production (PubMed:27109372).</text>
</comment>
<comment type="catalytic activity">
    <reaction evidence="7">
        <text>[(1-&gt;4)-N-acetyl-beta-D-glucosaminyl](n) + UDP-N-acetyl-alpha-D-glucosamine = [(1-&gt;4)-N-acetyl-beta-D-glucosaminyl](n+1) + UDP + H(+)</text>
        <dbReference type="Rhea" id="RHEA:16637"/>
        <dbReference type="Rhea" id="RHEA-COMP:9593"/>
        <dbReference type="Rhea" id="RHEA-COMP:9595"/>
        <dbReference type="ChEBI" id="CHEBI:15378"/>
        <dbReference type="ChEBI" id="CHEBI:17029"/>
        <dbReference type="ChEBI" id="CHEBI:57705"/>
        <dbReference type="ChEBI" id="CHEBI:58223"/>
        <dbReference type="EC" id="2.4.1.16"/>
    </reaction>
    <physiologicalReaction direction="left-to-right" evidence="7">
        <dbReference type="Rhea" id="RHEA:16638"/>
    </physiologicalReaction>
</comment>
<comment type="subcellular location">
    <subcellularLocation>
        <location evidence="4">Cell membrane</location>
        <topology evidence="1">Multi-pass membrane protein</topology>
    </subcellularLocation>
    <subcellularLocation>
        <location evidence="4">Cell septum</location>
    </subcellularLocation>
</comment>
<comment type="disruption phenotype">
    <text evidence="4">Reduces the chitin synthase activity and subsequent chitin content (PubMed:27109372). Leads to enhanced sensitivity to stress agents including acid, salt, and oxidant environments (PubMed:27109372). Reduces the production of deoxinivalenol (DON) and causes much less disease on flowering wheat heads (PubMed:27109372).</text>
</comment>
<comment type="similarity">
    <text evidence="6">Belongs to the chitin synthase family. Class VIII subfamily.</text>
</comment>
<sequence>MTSRMPTSGHRTSSSSSERGNMSVQQGKKPVVPGMSSGEDSSRPSTSYPQVPPAPLRPGWTLSRDSSVVRGINGDFHPGAQTPMSGMTHASWLTNNGNESNLSFTSSIMQEEAKLRWDSDEELKKMSKSMLRLQKWSLIIGLAGINGALIYIGWKYYQVYYFFLVLLSSNTVLQSFMCICIILHWFCTRVLCFWWRPKENIPAEPEKMVLLLPCYNETYEELTRSLDSLIAQKHIDNHPRVIFIVVDGNVRGPGMEKTTQEYLLQDILEPGPSRTFENGYRARDGLFMPVKTQTGFYKGIPYVFVGKRYNQGKRDSLCFARSLLYHFKQRSENVVTMFNNDLFEYIGNNFINAGLDDVTYLCGMDADTVFDEDCIYEMIVEIRKNPKVVGVCGHVCVDFDGSNWGYWSLYQSVEYSQTQGLRRMFQSRITGKVNCLPGCCQLIRVDEATFGDAVLRERFGYCPKPNDIMTQHIMGNYSEDSIHASIIFSLFPGCQTAQALRAKAMTIVPQDWKVFLSQRKRWALGSISNEFVMIFRPGIILIERLQSLIAVITWAITPFIIAAFVELLMVFAKRGKEVMSDPVFLGLICVLFFRYLYSFCIGFWLPRNNLERLQYFAGYVMHLFTSPFMNIIILVYSLFHSDDFKWGKTREVIRGEKDTDDAGGRGTH</sequence>
<accession>A0A0E0S977</accession>
<name>CHS8_GIBZE</name>
<feature type="chain" id="PRO_0000460799" description="Chitin synthase 8">
    <location>
        <begin position="1"/>
        <end position="668"/>
    </location>
</feature>
<feature type="transmembrane region" description="Helical" evidence="1">
    <location>
        <begin position="136"/>
        <end position="156"/>
    </location>
</feature>
<feature type="transmembrane region" description="Helical" evidence="1">
    <location>
        <begin position="162"/>
        <end position="182"/>
    </location>
</feature>
<feature type="transmembrane region" description="Helical" evidence="1">
    <location>
        <begin position="522"/>
        <end position="542"/>
    </location>
</feature>
<feature type="transmembrane region" description="Helical" evidence="1">
    <location>
        <begin position="548"/>
        <end position="568"/>
    </location>
</feature>
<feature type="transmembrane region" description="Helical" evidence="1">
    <location>
        <begin position="583"/>
        <end position="603"/>
    </location>
</feature>
<feature type="transmembrane region" description="Helical" evidence="1">
    <location>
        <begin position="615"/>
        <end position="635"/>
    </location>
</feature>
<feature type="region of interest" description="Disordered" evidence="3">
    <location>
        <begin position="1"/>
        <end position="62"/>
    </location>
</feature>
<feature type="compositionally biased region" description="Polar residues" evidence="3">
    <location>
        <begin position="1"/>
        <end position="26"/>
    </location>
</feature>
<feature type="glycosylation site" description="N-linked (GlcNAc...) asparagine" evidence="2">
    <location>
        <position position="21"/>
    </location>
</feature>
<feature type="glycosylation site" description="N-linked (GlcNAc...) asparagine" evidence="2">
    <location>
        <position position="98"/>
    </location>
</feature>
<feature type="glycosylation site" description="N-linked (GlcNAc...) asparagine" evidence="2">
    <location>
        <position position="101"/>
    </location>
</feature>
<feature type="glycosylation site" description="N-linked (GlcNAc...) asparagine" evidence="2">
    <location>
        <position position="216"/>
    </location>
</feature>
<feature type="glycosylation site" description="N-linked (GlcNAc...) asparagine" evidence="2">
    <location>
        <position position="476"/>
    </location>
</feature>
<keyword id="KW-1003">Cell membrane</keyword>
<keyword id="KW-0325">Glycoprotein</keyword>
<keyword id="KW-0328">Glycosyltransferase</keyword>
<keyword id="KW-0472">Membrane</keyword>
<keyword id="KW-1185">Reference proteome</keyword>
<keyword id="KW-0808">Transferase</keyword>
<keyword id="KW-0812">Transmembrane</keyword>
<keyword id="KW-1133">Transmembrane helix</keyword>
<keyword id="KW-0843">Virulence</keyword>
<gene>
    <name evidence="5" type="primary">CHS8</name>
    <name type="ORF">FG06550</name>
    <name type="ORF">FGRAMPH1_01T22563</name>
</gene>
<organism>
    <name type="scientific">Gibberella zeae (strain ATCC MYA-4620 / CBS 123657 / FGSC 9075 / NRRL 31084 / PH-1)</name>
    <name type="common">Wheat head blight fungus</name>
    <name type="synonym">Fusarium graminearum</name>
    <dbReference type="NCBI Taxonomy" id="229533"/>
    <lineage>
        <taxon>Eukaryota</taxon>
        <taxon>Fungi</taxon>
        <taxon>Dikarya</taxon>
        <taxon>Ascomycota</taxon>
        <taxon>Pezizomycotina</taxon>
        <taxon>Sordariomycetes</taxon>
        <taxon>Hypocreomycetidae</taxon>
        <taxon>Hypocreales</taxon>
        <taxon>Nectriaceae</taxon>
        <taxon>Fusarium</taxon>
    </lineage>
</organism>
<dbReference type="EC" id="2.4.1.16" evidence="7"/>
<dbReference type="EMBL" id="HG970335">
    <property type="protein sequence ID" value="CEF82990.1"/>
    <property type="molecule type" value="Genomic_DNA"/>
</dbReference>
<dbReference type="STRING" id="229533.A0A0E0S977"/>
<dbReference type="VEuPathDB" id="FungiDB:FGRAMPH1_01G22563"/>
<dbReference type="eggNOG" id="KOG2571">
    <property type="taxonomic scope" value="Eukaryota"/>
</dbReference>
<dbReference type="InParanoid" id="A0A0E0S977"/>
<dbReference type="PHI-base" id="PHI:6119"/>
<dbReference type="PHI-base" id="PHI:6186"/>
<dbReference type="Proteomes" id="UP000070720">
    <property type="component" value="Chromosome 4"/>
</dbReference>
<dbReference type="GO" id="GO:0030428">
    <property type="term" value="C:cell septum"/>
    <property type="evidence" value="ECO:0007669"/>
    <property type="project" value="UniProtKB-SubCell"/>
</dbReference>
<dbReference type="GO" id="GO:0005886">
    <property type="term" value="C:plasma membrane"/>
    <property type="evidence" value="ECO:0007669"/>
    <property type="project" value="UniProtKB-SubCell"/>
</dbReference>
<dbReference type="GO" id="GO:0004100">
    <property type="term" value="F:chitin synthase activity"/>
    <property type="evidence" value="ECO:0007669"/>
    <property type="project" value="UniProtKB-EC"/>
</dbReference>
<dbReference type="GO" id="GO:0006031">
    <property type="term" value="P:chitin biosynthetic process"/>
    <property type="evidence" value="ECO:0007669"/>
    <property type="project" value="TreeGrafter"/>
</dbReference>
<dbReference type="Gene3D" id="3.90.550.10">
    <property type="entry name" value="Spore Coat Polysaccharide Biosynthesis Protein SpsA, Chain A"/>
    <property type="match status" value="1"/>
</dbReference>
<dbReference type="InterPro" id="IPR004835">
    <property type="entry name" value="Chitin_synth"/>
</dbReference>
<dbReference type="InterPro" id="IPR029044">
    <property type="entry name" value="Nucleotide-diphossugar_trans"/>
</dbReference>
<dbReference type="PANTHER" id="PTHR22914">
    <property type="entry name" value="CHITIN SYNTHASE"/>
    <property type="match status" value="1"/>
</dbReference>
<dbReference type="PANTHER" id="PTHR22914:SF41">
    <property type="entry name" value="CHITIN SYNTHASE 7"/>
    <property type="match status" value="1"/>
</dbReference>
<dbReference type="Pfam" id="PF03142">
    <property type="entry name" value="Chitin_synth_2"/>
    <property type="match status" value="2"/>
</dbReference>
<dbReference type="SUPFAM" id="SSF53448">
    <property type="entry name" value="Nucleotide-diphospho-sugar transferases"/>
    <property type="match status" value="1"/>
</dbReference>
<protein>
    <recommendedName>
        <fullName evidence="5">Chitin synthase 8</fullName>
        <ecNumber evidence="7">2.4.1.16</ecNumber>
    </recommendedName>
    <alternativeName>
        <fullName evidence="6">Chitin-UDP acetyl-glucosaminyl transferase 8</fullName>
    </alternativeName>
    <alternativeName>
        <fullName evidence="5">Class-VIII chitin synthase 8</fullName>
    </alternativeName>
</protein>
<proteinExistence type="inferred from homology"/>
<evidence type="ECO:0000255" key="1"/>
<evidence type="ECO:0000255" key="2">
    <source>
        <dbReference type="PROSITE-ProRule" id="PRU00498"/>
    </source>
</evidence>
<evidence type="ECO:0000256" key="3">
    <source>
        <dbReference type="SAM" id="MobiDB-lite"/>
    </source>
</evidence>
<evidence type="ECO:0000269" key="4">
    <source>
    </source>
</evidence>
<evidence type="ECO:0000303" key="5">
    <source>
    </source>
</evidence>
<evidence type="ECO:0000305" key="6"/>
<evidence type="ECO:0000305" key="7">
    <source>
    </source>
</evidence>